<dbReference type="EC" id="4.1.1.65" evidence="1"/>
<dbReference type="EMBL" id="CP000087">
    <property type="protein sequence ID" value="ABE05050.1"/>
    <property type="molecule type" value="Genomic_DNA"/>
</dbReference>
<dbReference type="RefSeq" id="WP_011477630.1">
    <property type="nucleotide sequence ID" value="NC_007940.1"/>
</dbReference>
<dbReference type="SMR" id="Q1RHW4"/>
<dbReference type="KEGG" id="rbe:RBE_0969"/>
<dbReference type="eggNOG" id="COG0688">
    <property type="taxonomic scope" value="Bacteria"/>
</dbReference>
<dbReference type="HOGENOM" id="CLU_072492_0_0_5"/>
<dbReference type="OrthoDB" id="9790893at2"/>
<dbReference type="UniPathway" id="UPA00558">
    <property type="reaction ID" value="UER00616"/>
</dbReference>
<dbReference type="Proteomes" id="UP000001951">
    <property type="component" value="Chromosome"/>
</dbReference>
<dbReference type="GO" id="GO:0005886">
    <property type="term" value="C:plasma membrane"/>
    <property type="evidence" value="ECO:0007669"/>
    <property type="project" value="UniProtKB-SubCell"/>
</dbReference>
<dbReference type="GO" id="GO:0004609">
    <property type="term" value="F:phosphatidylserine decarboxylase activity"/>
    <property type="evidence" value="ECO:0007669"/>
    <property type="project" value="UniProtKB-UniRule"/>
</dbReference>
<dbReference type="GO" id="GO:0006646">
    <property type="term" value="P:phosphatidylethanolamine biosynthetic process"/>
    <property type="evidence" value="ECO:0007669"/>
    <property type="project" value="UniProtKB-UniRule"/>
</dbReference>
<dbReference type="HAMAP" id="MF_00664">
    <property type="entry name" value="PS_decarb_PSD_A"/>
    <property type="match status" value="1"/>
</dbReference>
<dbReference type="InterPro" id="IPR003817">
    <property type="entry name" value="PS_Dcarbxylase"/>
</dbReference>
<dbReference type="InterPro" id="IPR033175">
    <property type="entry name" value="PSD-A"/>
</dbReference>
<dbReference type="NCBIfam" id="NF003677">
    <property type="entry name" value="PRK05305.1-1"/>
    <property type="match status" value="1"/>
</dbReference>
<dbReference type="NCBIfam" id="NF003678">
    <property type="entry name" value="PRK05305.1-2"/>
    <property type="match status" value="1"/>
</dbReference>
<dbReference type="NCBIfam" id="NF003679">
    <property type="entry name" value="PRK05305.1-3"/>
    <property type="match status" value="1"/>
</dbReference>
<dbReference type="NCBIfam" id="NF003681">
    <property type="entry name" value="PRK05305.2-1"/>
    <property type="match status" value="1"/>
</dbReference>
<dbReference type="NCBIfam" id="NF003685">
    <property type="entry name" value="PRK05305.2-5"/>
    <property type="match status" value="1"/>
</dbReference>
<dbReference type="PANTHER" id="PTHR35809">
    <property type="entry name" value="ARCHAETIDYLSERINE DECARBOXYLASE PROENZYME-RELATED"/>
    <property type="match status" value="1"/>
</dbReference>
<dbReference type="PANTHER" id="PTHR35809:SF1">
    <property type="entry name" value="ARCHAETIDYLSERINE DECARBOXYLASE PROENZYME-RELATED"/>
    <property type="match status" value="1"/>
</dbReference>
<dbReference type="Pfam" id="PF02666">
    <property type="entry name" value="PS_Dcarbxylase"/>
    <property type="match status" value="1"/>
</dbReference>
<reference key="1">
    <citation type="journal article" date="2006" name="PLoS Genet.">
        <title>Genome sequence of Rickettsia bellii illuminates the role of amoebae in gene exchanges between intracellular pathogens.</title>
        <authorList>
            <person name="Ogata H."/>
            <person name="La Scola B."/>
            <person name="Audic S."/>
            <person name="Renesto P."/>
            <person name="Blanc G."/>
            <person name="Robert C."/>
            <person name="Fournier P.-E."/>
            <person name="Claverie J.-M."/>
            <person name="Raoult D."/>
        </authorList>
    </citation>
    <scope>NUCLEOTIDE SEQUENCE [LARGE SCALE GENOMIC DNA]</scope>
    <source>
        <strain>RML369-C</strain>
    </source>
</reference>
<comment type="function">
    <text evidence="1">Catalyzes the formation of phosphatidylethanolamine (PtdEtn) from phosphatidylserine (PtdSer).</text>
</comment>
<comment type="catalytic activity">
    <reaction evidence="1">
        <text>a 1,2-diacyl-sn-glycero-3-phospho-L-serine + H(+) = a 1,2-diacyl-sn-glycero-3-phosphoethanolamine + CO2</text>
        <dbReference type="Rhea" id="RHEA:20828"/>
        <dbReference type="ChEBI" id="CHEBI:15378"/>
        <dbReference type="ChEBI" id="CHEBI:16526"/>
        <dbReference type="ChEBI" id="CHEBI:57262"/>
        <dbReference type="ChEBI" id="CHEBI:64612"/>
        <dbReference type="EC" id="4.1.1.65"/>
    </reaction>
</comment>
<comment type="cofactor">
    <cofactor evidence="1">
        <name>pyruvate</name>
        <dbReference type="ChEBI" id="CHEBI:15361"/>
    </cofactor>
    <text evidence="1">Binds 1 pyruvoyl group covalently per subunit.</text>
</comment>
<comment type="pathway">
    <text evidence="1">Phospholipid metabolism; phosphatidylethanolamine biosynthesis; phosphatidylethanolamine from CDP-diacylglycerol: step 2/2.</text>
</comment>
<comment type="subunit">
    <text evidence="1">Heterodimer of a large membrane-associated beta subunit and a small pyruvoyl-containing alpha subunit.</text>
</comment>
<comment type="subcellular location">
    <subcellularLocation>
        <location evidence="1">Cell membrane</location>
        <topology evidence="1">Peripheral membrane protein</topology>
    </subcellularLocation>
</comment>
<comment type="PTM">
    <text evidence="1">Is synthesized initially as an inactive proenzyme. Formation of the active enzyme involves a self-maturation process in which the active site pyruvoyl group is generated from an internal serine residue via an autocatalytic post-translational modification. Two non-identical subunits are generated from the proenzyme in this reaction, and the pyruvate is formed at the N-terminus of the alpha chain, which is derived from the carboxyl end of the proenzyme. The post-translation cleavage follows an unusual pathway, termed non-hydrolytic serinolysis, in which the side chain hydroxyl group of the serine supplies its oxygen atom to form the C-terminus of the beta chain, while the remainder of the serine residue undergoes an oxidative deamination to produce ammonia and the pyruvoyl prosthetic group on the alpha chain.</text>
</comment>
<comment type="similarity">
    <text evidence="1">Belongs to the phosphatidylserine decarboxylase family. PSD-A subfamily.</text>
</comment>
<protein>
    <recommendedName>
        <fullName evidence="1">Phosphatidylserine decarboxylase proenzyme</fullName>
        <ecNumber evidence="1">4.1.1.65</ecNumber>
    </recommendedName>
    <component>
        <recommendedName>
            <fullName evidence="1">Phosphatidylserine decarboxylase alpha chain</fullName>
        </recommendedName>
    </component>
    <component>
        <recommendedName>
            <fullName evidence="1">Phosphatidylserine decarboxylase beta chain</fullName>
        </recommendedName>
    </component>
</protein>
<sequence>MKQYNDLFKIIHREGYIFIASFALVSFLLASFNEKLGCMGFIATAWCIYFFRNPDRFVPIGNDLVISPADGVIQEIKEALPPAELGLGDVEMIRVSIFLNIFNVHVNRIPANGKILALHYNPGKFFNASLDKASVYNERQSVLMETEQGQKIAFVQIAGLIARRIVCDLEESNEVKAGERYGIIRFGSRVDVYLPLKTALLVSKGQTAIGGETIIADFGRKKTAELQFERK</sequence>
<evidence type="ECO:0000255" key="1">
    <source>
        <dbReference type="HAMAP-Rule" id="MF_00664"/>
    </source>
</evidence>
<organism>
    <name type="scientific">Rickettsia bellii (strain RML369-C)</name>
    <dbReference type="NCBI Taxonomy" id="336407"/>
    <lineage>
        <taxon>Bacteria</taxon>
        <taxon>Pseudomonadati</taxon>
        <taxon>Pseudomonadota</taxon>
        <taxon>Alphaproteobacteria</taxon>
        <taxon>Rickettsiales</taxon>
        <taxon>Rickettsiaceae</taxon>
        <taxon>Rickettsieae</taxon>
        <taxon>Rickettsia</taxon>
        <taxon>belli group</taxon>
    </lineage>
</organism>
<gene>
    <name evidence="1" type="primary">psd</name>
    <name type="ordered locus">RBE_0969</name>
</gene>
<feature type="chain" id="PRO_0000262265" description="Phosphatidylserine decarboxylase beta chain" evidence="1">
    <location>
        <begin position="1"/>
        <end position="187"/>
    </location>
</feature>
<feature type="chain" id="PRO_0000262266" description="Phosphatidylserine decarboxylase alpha chain" evidence="1">
    <location>
        <begin position="188"/>
        <end position="231"/>
    </location>
</feature>
<feature type="active site" description="Schiff-base intermediate with substrate; via pyruvic acid" evidence="1">
    <location>
        <position position="188"/>
    </location>
</feature>
<feature type="site" description="Cleavage (non-hydrolytic); by autocatalysis" evidence="1">
    <location>
        <begin position="187"/>
        <end position="188"/>
    </location>
</feature>
<feature type="modified residue" description="Pyruvic acid (Ser); by autocatalysis" evidence="1">
    <location>
        <position position="188"/>
    </location>
</feature>
<accession>Q1RHW4</accession>
<keyword id="KW-1003">Cell membrane</keyword>
<keyword id="KW-0210">Decarboxylase</keyword>
<keyword id="KW-0444">Lipid biosynthesis</keyword>
<keyword id="KW-0443">Lipid metabolism</keyword>
<keyword id="KW-0456">Lyase</keyword>
<keyword id="KW-0472">Membrane</keyword>
<keyword id="KW-0594">Phospholipid biosynthesis</keyword>
<keyword id="KW-1208">Phospholipid metabolism</keyword>
<keyword id="KW-0670">Pyruvate</keyword>
<keyword id="KW-0865">Zymogen</keyword>
<proteinExistence type="inferred from homology"/>
<name>PSD_RICBR</name>